<feature type="chain" id="PRO_1000008014" description="Sugar fermentation stimulation protein homolog">
    <location>
        <begin position="1"/>
        <end position="237"/>
    </location>
</feature>
<dbReference type="EMBL" id="CP000712">
    <property type="protein sequence ID" value="ABQ80675.1"/>
    <property type="molecule type" value="Genomic_DNA"/>
</dbReference>
<dbReference type="SMR" id="A5W965"/>
<dbReference type="KEGG" id="ppf:Pput_4555"/>
<dbReference type="eggNOG" id="COG1489">
    <property type="taxonomic scope" value="Bacteria"/>
</dbReference>
<dbReference type="HOGENOM" id="CLU_052299_2_0_6"/>
<dbReference type="GO" id="GO:0003677">
    <property type="term" value="F:DNA binding"/>
    <property type="evidence" value="ECO:0007669"/>
    <property type="project" value="InterPro"/>
</dbReference>
<dbReference type="CDD" id="cd22359">
    <property type="entry name" value="SfsA-like_bacterial"/>
    <property type="match status" value="1"/>
</dbReference>
<dbReference type="FunFam" id="2.40.50.580:FF:000001">
    <property type="entry name" value="Sugar fermentation stimulation protein A"/>
    <property type="match status" value="1"/>
</dbReference>
<dbReference type="FunFam" id="3.40.1350.60:FF:000001">
    <property type="entry name" value="Sugar fermentation stimulation protein A"/>
    <property type="match status" value="1"/>
</dbReference>
<dbReference type="Gene3D" id="2.40.50.580">
    <property type="match status" value="1"/>
</dbReference>
<dbReference type="Gene3D" id="3.40.1350.60">
    <property type="match status" value="1"/>
</dbReference>
<dbReference type="HAMAP" id="MF_00095">
    <property type="entry name" value="SfsA"/>
    <property type="match status" value="1"/>
</dbReference>
<dbReference type="InterPro" id="IPR005224">
    <property type="entry name" value="SfsA"/>
</dbReference>
<dbReference type="InterPro" id="IPR040452">
    <property type="entry name" value="SfsA_C"/>
</dbReference>
<dbReference type="InterPro" id="IPR041465">
    <property type="entry name" value="SfsA_N"/>
</dbReference>
<dbReference type="NCBIfam" id="TIGR00230">
    <property type="entry name" value="sfsA"/>
    <property type="match status" value="1"/>
</dbReference>
<dbReference type="PANTHER" id="PTHR30545">
    <property type="entry name" value="SUGAR FERMENTATION STIMULATION PROTEIN A"/>
    <property type="match status" value="1"/>
</dbReference>
<dbReference type="PANTHER" id="PTHR30545:SF2">
    <property type="entry name" value="SUGAR FERMENTATION STIMULATION PROTEIN A"/>
    <property type="match status" value="1"/>
</dbReference>
<dbReference type="Pfam" id="PF03749">
    <property type="entry name" value="SfsA"/>
    <property type="match status" value="1"/>
</dbReference>
<dbReference type="Pfam" id="PF17746">
    <property type="entry name" value="SfsA_N"/>
    <property type="match status" value="1"/>
</dbReference>
<protein>
    <recommendedName>
        <fullName evidence="1">Sugar fermentation stimulation protein homolog</fullName>
    </recommendedName>
</protein>
<comment type="similarity">
    <text evidence="1">Belongs to the SfsA family.</text>
</comment>
<reference key="1">
    <citation type="submission" date="2007-05" db="EMBL/GenBank/DDBJ databases">
        <title>Complete sequence of Pseudomonas putida F1.</title>
        <authorList>
            <consortium name="US DOE Joint Genome Institute"/>
            <person name="Copeland A."/>
            <person name="Lucas S."/>
            <person name="Lapidus A."/>
            <person name="Barry K."/>
            <person name="Detter J.C."/>
            <person name="Glavina del Rio T."/>
            <person name="Hammon N."/>
            <person name="Israni S."/>
            <person name="Dalin E."/>
            <person name="Tice H."/>
            <person name="Pitluck S."/>
            <person name="Chain P."/>
            <person name="Malfatti S."/>
            <person name="Shin M."/>
            <person name="Vergez L."/>
            <person name="Schmutz J."/>
            <person name="Larimer F."/>
            <person name="Land M."/>
            <person name="Hauser L."/>
            <person name="Kyrpides N."/>
            <person name="Lykidis A."/>
            <person name="Parales R."/>
            <person name="Richardson P."/>
        </authorList>
    </citation>
    <scope>NUCLEOTIDE SEQUENCE [LARGE SCALE GENOMIC DNA]</scope>
    <source>
        <strain>ATCC 700007 / DSM 6899 / JCM 31910 / BCRC 17059 / LMG 24140 / F1</strain>
    </source>
</reference>
<accession>A5W965</accession>
<gene>
    <name evidence="1" type="primary">sfsA</name>
    <name type="ordered locus">Pput_4555</name>
</gene>
<name>SFSA_PSEP1</name>
<evidence type="ECO:0000255" key="1">
    <source>
        <dbReference type="HAMAP-Rule" id="MF_00095"/>
    </source>
</evidence>
<proteinExistence type="inferred from homology"/>
<organism>
    <name type="scientific">Pseudomonas putida (strain ATCC 700007 / DSM 6899 / JCM 31910 / BCRC 17059 / LMG 24140 / F1)</name>
    <dbReference type="NCBI Taxonomy" id="351746"/>
    <lineage>
        <taxon>Bacteria</taxon>
        <taxon>Pseudomonadati</taxon>
        <taxon>Pseudomonadota</taxon>
        <taxon>Gammaproteobacteria</taxon>
        <taxon>Pseudomonadales</taxon>
        <taxon>Pseudomonadaceae</taxon>
        <taxon>Pseudomonas</taxon>
    </lineage>
</organism>
<sequence length="237" mass="26009">MRFSPSLEQGRLLRRYKRFLADIELASGEQMTIHCPNTGSMLNCMREGGQVWFSRSNDPKRKLPGTWEISETPQGRLACVNTGRANALVEEALRAGTITELVGFTALKREVAYGEEGSRIDFRLEFEGAPAYVEVKSVTLGYPDTAVAAFPDAVTQRGAKHLRELAKLARQGVRAVQLYCVNLTGIDAVRPAEEIDTAYAQALRAAVADGVEVLAYGTRLDAEGIVIDRRLPVLLTP</sequence>